<sequence length="231" mass="25012">MPKHGKRYREVSKLVSRQELYEPDEAIELLKKTASAKFDETVEVAVKLGVDPRHADQQVRGTVVLPNGTGKTRRVLVFAKGDKAKEAEEAGADFVGAEDLVEKIQGGWLDFDVAIATPDMMGLVGRLGRILGPRGLMPNPKAGTVTMDIARAVKEVKAGKIEFRVDKTAIIHAPIGKASFEASKLKENFQALMDALLRAKPATAKGQYLKSVSLATTMGPGIRVNPLRAVK</sequence>
<reference key="1">
    <citation type="journal article" date="2008" name="Environ. Microbiol.">
        <title>The complete genome sequence of Moorella thermoacetica (f. Clostridium thermoaceticum).</title>
        <authorList>
            <person name="Pierce E."/>
            <person name="Xie G."/>
            <person name="Barabote R.D."/>
            <person name="Saunders E."/>
            <person name="Han C.S."/>
            <person name="Detter J.C."/>
            <person name="Richardson P."/>
            <person name="Brettin T.S."/>
            <person name="Das A."/>
            <person name="Ljungdahl L.G."/>
            <person name="Ragsdale S.W."/>
        </authorList>
    </citation>
    <scope>NUCLEOTIDE SEQUENCE [LARGE SCALE GENOMIC DNA]</scope>
    <source>
        <strain>ATCC 39073 / JCM 9320</strain>
    </source>
</reference>
<evidence type="ECO:0000255" key="1">
    <source>
        <dbReference type="HAMAP-Rule" id="MF_01318"/>
    </source>
</evidence>
<evidence type="ECO:0000305" key="2"/>
<organism>
    <name type="scientific">Moorella thermoacetica (strain ATCC 39073 / JCM 9320)</name>
    <dbReference type="NCBI Taxonomy" id="264732"/>
    <lineage>
        <taxon>Bacteria</taxon>
        <taxon>Bacillati</taxon>
        <taxon>Bacillota</taxon>
        <taxon>Clostridia</taxon>
        <taxon>Moorellales</taxon>
        <taxon>Moorellaceae</taxon>
        <taxon>Moorella</taxon>
    </lineage>
</organism>
<name>RL1_MOOTA</name>
<dbReference type="EMBL" id="CP000232">
    <property type="protein sequence ID" value="ABC20753.1"/>
    <property type="molecule type" value="Genomic_DNA"/>
</dbReference>
<dbReference type="RefSeq" id="YP_431296.1">
    <property type="nucleotide sequence ID" value="NC_007644.1"/>
</dbReference>
<dbReference type="SMR" id="Q2RFN6"/>
<dbReference type="STRING" id="264732.Moth_2471"/>
<dbReference type="EnsemblBacteria" id="ABC20753">
    <property type="protein sequence ID" value="ABC20753"/>
    <property type="gene ID" value="Moth_2471"/>
</dbReference>
<dbReference type="KEGG" id="mta:Moth_2471"/>
<dbReference type="PATRIC" id="fig|264732.11.peg.2689"/>
<dbReference type="eggNOG" id="COG0081">
    <property type="taxonomic scope" value="Bacteria"/>
</dbReference>
<dbReference type="HOGENOM" id="CLU_062853_0_0_9"/>
<dbReference type="OrthoDB" id="9803740at2"/>
<dbReference type="GO" id="GO:0015934">
    <property type="term" value="C:large ribosomal subunit"/>
    <property type="evidence" value="ECO:0007669"/>
    <property type="project" value="InterPro"/>
</dbReference>
<dbReference type="GO" id="GO:0019843">
    <property type="term" value="F:rRNA binding"/>
    <property type="evidence" value="ECO:0007669"/>
    <property type="project" value="UniProtKB-UniRule"/>
</dbReference>
<dbReference type="GO" id="GO:0003735">
    <property type="term" value="F:structural constituent of ribosome"/>
    <property type="evidence" value="ECO:0007669"/>
    <property type="project" value="InterPro"/>
</dbReference>
<dbReference type="GO" id="GO:0000049">
    <property type="term" value="F:tRNA binding"/>
    <property type="evidence" value="ECO:0007669"/>
    <property type="project" value="UniProtKB-KW"/>
</dbReference>
<dbReference type="GO" id="GO:0006417">
    <property type="term" value="P:regulation of translation"/>
    <property type="evidence" value="ECO:0007669"/>
    <property type="project" value="UniProtKB-KW"/>
</dbReference>
<dbReference type="GO" id="GO:0006412">
    <property type="term" value="P:translation"/>
    <property type="evidence" value="ECO:0007669"/>
    <property type="project" value="UniProtKB-UniRule"/>
</dbReference>
<dbReference type="CDD" id="cd00403">
    <property type="entry name" value="Ribosomal_L1"/>
    <property type="match status" value="1"/>
</dbReference>
<dbReference type="FunFam" id="3.40.50.790:FF:000001">
    <property type="entry name" value="50S ribosomal protein L1"/>
    <property type="match status" value="1"/>
</dbReference>
<dbReference type="Gene3D" id="3.30.190.20">
    <property type="match status" value="1"/>
</dbReference>
<dbReference type="Gene3D" id="3.40.50.790">
    <property type="match status" value="1"/>
</dbReference>
<dbReference type="HAMAP" id="MF_01318_B">
    <property type="entry name" value="Ribosomal_uL1_B"/>
    <property type="match status" value="1"/>
</dbReference>
<dbReference type="InterPro" id="IPR005878">
    <property type="entry name" value="Ribosom_uL1_bac-type"/>
</dbReference>
<dbReference type="InterPro" id="IPR002143">
    <property type="entry name" value="Ribosomal_uL1"/>
</dbReference>
<dbReference type="InterPro" id="IPR023674">
    <property type="entry name" value="Ribosomal_uL1-like"/>
</dbReference>
<dbReference type="InterPro" id="IPR028364">
    <property type="entry name" value="Ribosomal_uL1/biogenesis"/>
</dbReference>
<dbReference type="InterPro" id="IPR016095">
    <property type="entry name" value="Ribosomal_uL1_3-a/b-sand"/>
</dbReference>
<dbReference type="InterPro" id="IPR023673">
    <property type="entry name" value="Ribosomal_uL1_CS"/>
</dbReference>
<dbReference type="NCBIfam" id="TIGR01169">
    <property type="entry name" value="rplA_bact"/>
    <property type="match status" value="1"/>
</dbReference>
<dbReference type="PANTHER" id="PTHR36427">
    <property type="entry name" value="54S RIBOSOMAL PROTEIN L1, MITOCHONDRIAL"/>
    <property type="match status" value="1"/>
</dbReference>
<dbReference type="PANTHER" id="PTHR36427:SF3">
    <property type="entry name" value="LARGE RIBOSOMAL SUBUNIT PROTEIN UL1M"/>
    <property type="match status" value="1"/>
</dbReference>
<dbReference type="Pfam" id="PF00687">
    <property type="entry name" value="Ribosomal_L1"/>
    <property type="match status" value="1"/>
</dbReference>
<dbReference type="PIRSF" id="PIRSF002155">
    <property type="entry name" value="Ribosomal_L1"/>
    <property type="match status" value="1"/>
</dbReference>
<dbReference type="SUPFAM" id="SSF56808">
    <property type="entry name" value="Ribosomal protein L1"/>
    <property type="match status" value="1"/>
</dbReference>
<dbReference type="PROSITE" id="PS01199">
    <property type="entry name" value="RIBOSOMAL_L1"/>
    <property type="match status" value="1"/>
</dbReference>
<keyword id="KW-0678">Repressor</keyword>
<keyword id="KW-0687">Ribonucleoprotein</keyword>
<keyword id="KW-0689">Ribosomal protein</keyword>
<keyword id="KW-0694">RNA-binding</keyword>
<keyword id="KW-0699">rRNA-binding</keyword>
<keyword id="KW-0810">Translation regulation</keyword>
<keyword id="KW-0820">tRNA-binding</keyword>
<protein>
    <recommendedName>
        <fullName evidence="1">Large ribosomal subunit protein uL1</fullName>
    </recommendedName>
    <alternativeName>
        <fullName evidence="2">50S ribosomal protein L1</fullName>
    </alternativeName>
</protein>
<accession>Q2RFN6</accession>
<gene>
    <name evidence="1" type="primary">rplA</name>
    <name type="ordered locus">Moth_2471</name>
</gene>
<feature type="chain" id="PRO_0000308048" description="Large ribosomal subunit protein uL1">
    <location>
        <begin position="1"/>
        <end position="231"/>
    </location>
</feature>
<proteinExistence type="inferred from homology"/>
<comment type="function">
    <text evidence="1">Binds directly to 23S rRNA. The L1 stalk is quite mobile in the ribosome, and is involved in E site tRNA release.</text>
</comment>
<comment type="function">
    <text evidence="1">Protein L1 is also a translational repressor protein, it controls the translation of the L11 operon by binding to its mRNA.</text>
</comment>
<comment type="subunit">
    <text evidence="1">Part of the 50S ribosomal subunit.</text>
</comment>
<comment type="similarity">
    <text evidence="1">Belongs to the universal ribosomal protein uL1 family.</text>
</comment>